<sequence length="134" mass="14657">MTLNLCVLTPNRIIWDSEVKEIILSTNSGQIGVLPNHAPIATAVDIGILKIRLQEQWLTMALMGGFARIGNNEITILVNDAEKGSDIDPQEAQQTLEIAEANLSRAEGKRQTIEANLALRRARTRVEAINAISS</sequence>
<geneLocation type="chloroplast"/>
<dbReference type="EMBL" id="AJ506156">
    <property type="protein sequence ID" value="CAD45113.1"/>
    <property type="molecule type" value="Genomic_DNA"/>
</dbReference>
<dbReference type="RefSeq" id="NP_904105.1">
    <property type="nucleotide sequence ID" value="NC_005086.1"/>
</dbReference>
<dbReference type="SMR" id="Q70XZ7"/>
<dbReference type="STRING" id="13333.Q70XZ7"/>
<dbReference type="GeneID" id="2546498"/>
<dbReference type="KEGG" id="atr:2546498"/>
<dbReference type="eggNOG" id="KOG1350">
    <property type="taxonomic scope" value="Eukaryota"/>
</dbReference>
<dbReference type="eggNOG" id="KOG1758">
    <property type="taxonomic scope" value="Eukaryota"/>
</dbReference>
<dbReference type="OrthoDB" id="423436at2759"/>
<dbReference type="Proteomes" id="UP000017836">
    <property type="component" value="Chloroplast"/>
</dbReference>
<dbReference type="GO" id="GO:0009535">
    <property type="term" value="C:chloroplast thylakoid membrane"/>
    <property type="evidence" value="ECO:0007669"/>
    <property type="project" value="UniProtKB-SubCell"/>
</dbReference>
<dbReference type="GO" id="GO:0045259">
    <property type="term" value="C:proton-transporting ATP synthase complex"/>
    <property type="evidence" value="ECO:0007669"/>
    <property type="project" value="UniProtKB-KW"/>
</dbReference>
<dbReference type="GO" id="GO:0005524">
    <property type="term" value="F:ATP binding"/>
    <property type="evidence" value="ECO:0007669"/>
    <property type="project" value="UniProtKB-UniRule"/>
</dbReference>
<dbReference type="GO" id="GO:0046933">
    <property type="term" value="F:proton-transporting ATP synthase activity, rotational mechanism"/>
    <property type="evidence" value="ECO:0007669"/>
    <property type="project" value="UniProtKB-UniRule"/>
</dbReference>
<dbReference type="GO" id="GO:0015986">
    <property type="term" value="P:proton motive force-driven ATP synthesis"/>
    <property type="evidence" value="ECO:0000318"/>
    <property type="project" value="GO_Central"/>
</dbReference>
<dbReference type="CDD" id="cd12152">
    <property type="entry name" value="F1-ATPase_delta"/>
    <property type="match status" value="1"/>
</dbReference>
<dbReference type="FunFam" id="2.60.15.10:FF:000002">
    <property type="entry name" value="ATP synthase epsilon chain, chloroplastic"/>
    <property type="match status" value="1"/>
</dbReference>
<dbReference type="Gene3D" id="6.10.140.480">
    <property type="match status" value="1"/>
</dbReference>
<dbReference type="Gene3D" id="2.60.15.10">
    <property type="entry name" value="F0F1 ATP synthase delta/epsilon subunit, N-terminal"/>
    <property type="match status" value="1"/>
</dbReference>
<dbReference type="HAMAP" id="MF_00530">
    <property type="entry name" value="ATP_synth_epsil_bac"/>
    <property type="match status" value="1"/>
</dbReference>
<dbReference type="InterPro" id="IPR001469">
    <property type="entry name" value="ATP_synth_F1_dsu/esu"/>
</dbReference>
<dbReference type="InterPro" id="IPR020546">
    <property type="entry name" value="ATP_synth_F1_dsu/esu_N"/>
</dbReference>
<dbReference type="InterPro" id="IPR020547">
    <property type="entry name" value="ATP_synth_F1_esu_C"/>
</dbReference>
<dbReference type="InterPro" id="IPR036771">
    <property type="entry name" value="ATPsynth_dsu/esu_N"/>
</dbReference>
<dbReference type="NCBIfam" id="TIGR01216">
    <property type="entry name" value="ATP_synt_epsi"/>
    <property type="match status" value="1"/>
</dbReference>
<dbReference type="PANTHER" id="PTHR13822">
    <property type="entry name" value="ATP SYNTHASE DELTA/EPSILON CHAIN"/>
    <property type="match status" value="1"/>
</dbReference>
<dbReference type="PANTHER" id="PTHR13822:SF10">
    <property type="entry name" value="ATP SYNTHASE EPSILON CHAIN, CHLOROPLASTIC"/>
    <property type="match status" value="1"/>
</dbReference>
<dbReference type="Pfam" id="PF00401">
    <property type="entry name" value="ATP-synt_DE"/>
    <property type="match status" value="1"/>
</dbReference>
<dbReference type="Pfam" id="PF02823">
    <property type="entry name" value="ATP-synt_DE_N"/>
    <property type="match status" value="1"/>
</dbReference>
<dbReference type="SUPFAM" id="SSF51344">
    <property type="entry name" value="Epsilon subunit of F1F0-ATP synthase N-terminal domain"/>
    <property type="match status" value="1"/>
</dbReference>
<comment type="function">
    <text evidence="1">Produces ATP from ADP in the presence of a proton gradient across the membrane.</text>
</comment>
<comment type="subunit">
    <text evidence="1">F-type ATPases have 2 components, CF(1) - the catalytic core - and CF(0) - the membrane proton channel. CF(1) has five subunits: alpha(3), beta(3), gamma(1), delta(1), epsilon(1). CF(0) has three main subunits: a, b and c.</text>
</comment>
<comment type="subcellular location">
    <subcellularLocation>
        <location evidence="1">Plastid</location>
        <location evidence="1">Chloroplast thylakoid membrane</location>
        <topology evidence="1">Peripheral membrane protein</topology>
    </subcellularLocation>
</comment>
<comment type="similarity">
    <text evidence="1">Belongs to the ATPase epsilon chain family.</text>
</comment>
<reference key="1">
    <citation type="journal article" date="2003" name="Mol. Biol. Evol.">
        <title>Analysis of the Amborella trichopoda chloroplast genome sequence suggests that Amborella is not a basal angiosperm.</title>
        <authorList>
            <person name="Goremykin V.V."/>
            <person name="Hirsch-Ernst K.I."/>
            <person name="Wolfl S."/>
            <person name="Hellwig F.H."/>
        </authorList>
    </citation>
    <scope>NUCLEOTIDE SEQUENCE [LARGE SCALE GENOMIC DNA]</scope>
</reference>
<accession>Q70XZ7</accession>
<feature type="chain" id="PRO_0000188252" description="ATP synthase epsilon chain, chloroplastic">
    <location>
        <begin position="1"/>
        <end position="134"/>
    </location>
</feature>
<keyword id="KW-0066">ATP synthesis</keyword>
<keyword id="KW-0139">CF(1)</keyword>
<keyword id="KW-0150">Chloroplast</keyword>
<keyword id="KW-0375">Hydrogen ion transport</keyword>
<keyword id="KW-0406">Ion transport</keyword>
<keyword id="KW-0472">Membrane</keyword>
<keyword id="KW-0934">Plastid</keyword>
<keyword id="KW-1185">Reference proteome</keyword>
<keyword id="KW-0793">Thylakoid</keyword>
<keyword id="KW-0813">Transport</keyword>
<evidence type="ECO:0000255" key="1">
    <source>
        <dbReference type="HAMAP-Rule" id="MF_00530"/>
    </source>
</evidence>
<proteinExistence type="inferred from homology"/>
<protein>
    <recommendedName>
        <fullName evidence="1">ATP synthase epsilon chain, chloroplastic</fullName>
    </recommendedName>
    <alternativeName>
        <fullName evidence="1">ATP synthase F1 sector epsilon subunit</fullName>
    </alternativeName>
    <alternativeName>
        <fullName evidence="1">F-ATPase epsilon subunit</fullName>
    </alternativeName>
</protein>
<organism>
    <name type="scientific">Amborella trichopoda</name>
    <dbReference type="NCBI Taxonomy" id="13333"/>
    <lineage>
        <taxon>Eukaryota</taxon>
        <taxon>Viridiplantae</taxon>
        <taxon>Streptophyta</taxon>
        <taxon>Embryophyta</taxon>
        <taxon>Tracheophyta</taxon>
        <taxon>Spermatophyta</taxon>
        <taxon>Magnoliopsida</taxon>
        <taxon>Amborellales</taxon>
        <taxon>Amborellaceae</taxon>
        <taxon>Amborella</taxon>
    </lineage>
</organism>
<gene>
    <name evidence="1" type="primary">atpE</name>
</gene>
<name>ATPE_AMBTC</name>